<feature type="chain" id="PRO_1000188991" description="Acetyl esterase">
    <location>
        <begin position="1"/>
        <end position="323"/>
    </location>
</feature>
<feature type="short sequence motif" description="Involved in the stabilization of the negatively charged intermediate by the formation of the oxyanion hole" evidence="1">
    <location>
        <begin position="91"/>
        <end position="93"/>
    </location>
</feature>
<feature type="active site" evidence="2">
    <location>
        <position position="165"/>
    </location>
</feature>
<feature type="active site" evidence="2">
    <location>
        <position position="262"/>
    </location>
</feature>
<feature type="active site" evidence="2">
    <location>
        <position position="292"/>
    </location>
</feature>
<protein>
    <recommendedName>
        <fullName evidence="2">Acetyl esterase</fullName>
        <ecNumber evidence="2">3.1.1.-</ecNumber>
    </recommendedName>
</protein>
<proteinExistence type="inferred from homology"/>
<evidence type="ECO:0000250" key="1">
    <source>
        <dbReference type="UniProtKB" id="Q5NUF3"/>
    </source>
</evidence>
<evidence type="ECO:0000255" key="2">
    <source>
        <dbReference type="HAMAP-Rule" id="MF_01958"/>
    </source>
</evidence>
<name>AES_SALDC</name>
<dbReference type="EC" id="3.1.1.-" evidence="2"/>
<dbReference type="EMBL" id="CP001144">
    <property type="protein sequence ID" value="ACH77562.1"/>
    <property type="molecule type" value="Genomic_DNA"/>
</dbReference>
<dbReference type="RefSeq" id="WP_000801777.1">
    <property type="nucleotide sequence ID" value="NC_011205.1"/>
</dbReference>
<dbReference type="SMR" id="B5FLK0"/>
<dbReference type="ESTHER" id="salty-AES">
    <property type="family name" value="Acetyl_esterase"/>
</dbReference>
<dbReference type="MEROPS" id="S09.A47"/>
<dbReference type="KEGG" id="sed:SeD_A0537"/>
<dbReference type="HOGENOM" id="CLU_012494_6_4_6"/>
<dbReference type="Proteomes" id="UP000008322">
    <property type="component" value="Chromosome"/>
</dbReference>
<dbReference type="GO" id="GO:0005737">
    <property type="term" value="C:cytoplasm"/>
    <property type="evidence" value="ECO:0007669"/>
    <property type="project" value="UniProtKB-SubCell"/>
</dbReference>
<dbReference type="GO" id="GO:0052689">
    <property type="term" value="F:carboxylic ester hydrolase activity"/>
    <property type="evidence" value="ECO:0007669"/>
    <property type="project" value="UniProtKB-UniRule"/>
</dbReference>
<dbReference type="FunFam" id="3.40.50.1820:FF:000035">
    <property type="entry name" value="Acetyl esterase"/>
    <property type="match status" value="1"/>
</dbReference>
<dbReference type="Gene3D" id="3.40.50.1820">
    <property type="entry name" value="alpha/beta hydrolase"/>
    <property type="match status" value="1"/>
</dbReference>
<dbReference type="HAMAP" id="MF_01958">
    <property type="entry name" value="Acetyl_esterase"/>
    <property type="match status" value="1"/>
</dbReference>
<dbReference type="InterPro" id="IPR013094">
    <property type="entry name" value="AB_hydrolase_3"/>
</dbReference>
<dbReference type="InterPro" id="IPR029058">
    <property type="entry name" value="AB_hydrolase_fold"/>
</dbReference>
<dbReference type="InterPro" id="IPR023508">
    <property type="entry name" value="Acetyl_esterase"/>
</dbReference>
<dbReference type="InterPro" id="IPR050300">
    <property type="entry name" value="GDXG_lipolytic_enzyme"/>
</dbReference>
<dbReference type="InterPro" id="IPR033140">
    <property type="entry name" value="Lipase_GDXG_put_SER_AS"/>
</dbReference>
<dbReference type="NCBIfam" id="NF007547">
    <property type="entry name" value="PRK10162.1"/>
    <property type="match status" value="1"/>
</dbReference>
<dbReference type="PANTHER" id="PTHR48081">
    <property type="entry name" value="AB HYDROLASE SUPERFAMILY PROTEIN C4A8.06C"/>
    <property type="match status" value="1"/>
</dbReference>
<dbReference type="PANTHER" id="PTHR48081:SF8">
    <property type="entry name" value="ALPHA_BETA HYDROLASE FOLD-3 DOMAIN-CONTAINING PROTEIN-RELATED"/>
    <property type="match status" value="1"/>
</dbReference>
<dbReference type="Pfam" id="PF07859">
    <property type="entry name" value="Abhydrolase_3"/>
    <property type="match status" value="1"/>
</dbReference>
<dbReference type="SUPFAM" id="SSF53474">
    <property type="entry name" value="alpha/beta-Hydrolases"/>
    <property type="match status" value="1"/>
</dbReference>
<dbReference type="PROSITE" id="PS01174">
    <property type="entry name" value="LIPASE_GDXG_SER"/>
    <property type="match status" value="1"/>
</dbReference>
<accession>B5FLK0</accession>
<organism>
    <name type="scientific">Salmonella dublin (strain CT_02021853)</name>
    <dbReference type="NCBI Taxonomy" id="439851"/>
    <lineage>
        <taxon>Bacteria</taxon>
        <taxon>Pseudomonadati</taxon>
        <taxon>Pseudomonadota</taxon>
        <taxon>Gammaproteobacteria</taxon>
        <taxon>Enterobacterales</taxon>
        <taxon>Enterobacteriaceae</taxon>
        <taxon>Salmonella</taxon>
    </lineage>
</organism>
<keyword id="KW-0963">Cytoplasm</keyword>
<keyword id="KW-0378">Hydrolase</keyword>
<keyword id="KW-0719">Serine esterase</keyword>
<reference key="1">
    <citation type="journal article" date="2011" name="J. Bacteriol.">
        <title>Comparative genomics of 28 Salmonella enterica isolates: evidence for CRISPR-mediated adaptive sublineage evolution.</title>
        <authorList>
            <person name="Fricke W.F."/>
            <person name="Mammel M.K."/>
            <person name="McDermott P.F."/>
            <person name="Tartera C."/>
            <person name="White D.G."/>
            <person name="Leclerc J.E."/>
            <person name="Ravel J."/>
            <person name="Cebula T.A."/>
        </authorList>
    </citation>
    <scope>NUCLEOTIDE SEQUENCE [LARGE SCALE GENOMIC DNA]</scope>
    <source>
        <strain>CT_02021853</strain>
    </source>
</reference>
<gene>
    <name evidence="2" type="primary">aes</name>
    <name type="ordered locus">SeD_A0537</name>
</gene>
<sequence length="323" mass="36826">MKPENKIPVLTRLSDEMKAVVNFQQPGLPPWPADGDIETQRQYYLLERRFWNADAPSMTTRTCAVPTPYGDVTTRLYSPQPTSQATLYYLHGGGFILGNLDTHDRIMRLLARYTGCTVIGIDYSLSPQARYPQAIEETVAVCSYFSQHADEYSLNVEKIGFAGDSAGAMLALASALWLRDKHIRCGNVIAILLWYGLYGLQDSVSRRLFGGAWDGLTREDLDMYEKAYLRNDEDRESPWYCLFNNDLTRDVPPCFIASAEFDPLIDDSRLLHKTLQAHQQPCEYKMYPGTLHAFLHYSRMMTIADDALQDGARFFMARMKTPR</sequence>
<comment type="function">
    <text evidence="2">Displays esterase activity towards short chain fatty esters (acyl chain length of up to 8 carbons). Able to hydrolyze triacetylglycerol (triacetin) and tributyrylglycerol (tributyrin), but not trioleylglycerol (triolein) or cholesterol oleate. Negatively regulates MalT activity by antagonizing maltotriose binding. Inhibits MelA galactosidase activity.</text>
</comment>
<comment type="subunit">
    <text evidence="2">Homodimer. Interacts with MalT and MelA.</text>
</comment>
<comment type="subcellular location">
    <subcellularLocation>
        <location evidence="2">Cytoplasm</location>
    </subcellularLocation>
</comment>
<comment type="similarity">
    <text evidence="2">Belongs to the 'GDXG' lipolytic enzyme family.</text>
</comment>